<accession>Q96255</accession>
<accession>Q1EBU1</accession>
<accession>Q8L7P0</accession>
<accession>Q8LBA3</accession>
<dbReference type="EC" id="2.6.1.52" evidence="2 5"/>
<dbReference type="EMBL" id="D88541">
    <property type="protein sequence ID" value="BAA13640.1"/>
    <property type="molecule type" value="mRNA"/>
</dbReference>
<dbReference type="EMBL" id="AB010408">
    <property type="protein sequence ID" value="BAA24441.1"/>
    <property type="molecule type" value="Genomic_DNA"/>
</dbReference>
<dbReference type="EMBL" id="AL031135">
    <property type="protein sequence ID" value="CAA20033.1"/>
    <property type="molecule type" value="Genomic_DNA"/>
</dbReference>
<dbReference type="EMBL" id="AL161587">
    <property type="protein sequence ID" value="CAB80279.1"/>
    <property type="molecule type" value="Genomic_DNA"/>
</dbReference>
<dbReference type="EMBL" id="CP002687">
    <property type="protein sequence ID" value="AEE86542.1"/>
    <property type="molecule type" value="Genomic_DNA"/>
</dbReference>
<dbReference type="EMBL" id="AY128340">
    <property type="protein sequence ID" value="AAM91543.1"/>
    <property type="molecule type" value="mRNA"/>
</dbReference>
<dbReference type="EMBL" id="BT025993">
    <property type="protein sequence ID" value="ABG25082.1"/>
    <property type="molecule type" value="mRNA"/>
</dbReference>
<dbReference type="EMBL" id="AY087331">
    <property type="protein sequence ID" value="AAM64881.1"/>
    <property type="molecule type" value="mRNA"/>
</dbReference>
<dbReference type="PIR" id="T04668">
    <property type="entry name" value="T04668"/>
</dbReference>
<dbReference type="PDB" id="6CZX">
    <property type="method" value="X-ray"/>
    <property type="resolution" value="1.57 A"/>
    <property type="chains" value="A/B/C/D=72-430"/>
</dbReference>
<dbReference type="PDB" id="6CZY">
    <property type="method" value="X-ray"/>
    <property type="resolution" value="1.75 A"/>
    <property type="chains" value="A/B/C/D=72-430"/>
</dbReference>
<dbReference type="PDB" id="6CZZ">
    <property type="method" value="X-ray"/>
    <property type="resolution" value="1.70 A"/>
    <property type="chains" value="A/B/C/D=72-430"/>
</dbReference>
<dbReference type="PDBsum" id="6CZX"/>
<dbReference type="PDBsum" id="6CZY"/>
<dbReference type="PDBsum" id="6CZZ"/>
<dbReference type="SMR" id="Q96255"/>
<dbReference type="BioGRID" id="14997">
    <property type="interactions" value="13"/>
</dbReference>
<dbReference type="FunCoup" id="Q96255">
    <property type="interactions" value="2072"/>
</dbReference>
<dbReference type="STRING" id="3702.Q96255"/>
<dbReference type="iPTMnet" id="Q96255"/>
<dbReference type="PaxDb" id="3702-AT4G35630.1"/>
<dbReference type="ProMEX" id="Q96255"/>
<dbReference type="ProteomicsDB" id="234484"/>
<dbReference type="EnsemblPlants" id="AT4G35630.1">
    <property type="protein sequence ID" value="AT4G35630.1"/>
    <property type="gene ID" value="AT4G35630"/>
</dbReference>
<dbReference type="GeneID" id="829715"/>
<dbReference type="Gramene" id="AT4G35630.1">
    <property type="protein sequence ID" value="AT4G35630.1"/>
    <property type="gene ID" value="AT4G35630"/>
</dbReference>
<dbReference type="KEGG" id="ath:AT4G35630"/>
<dbReference type="Araport" id="AT4G35630"/>
<dbReference type="TAIR" id="AT4G35630">
    <property type="gene designation" value="PSAT1"/>
</dbReference>
<dbReference type="eggNOG" id="KOG2790">
    <property type="taxonomic scope" value="Eukaryota"/>
</dbReference>
<dbReference type="HOGENOM" id="CLU_034866_0_2_1"/>
<dbReference type="InParanoid" id="Q96255"/>
<dbReference type="OMA" id="AFVYFCD"/>
<dbReference type="PhylomeDB" id="Q96255"/>
<dbReference type="BioCyc" id="ARA:AT4G35630-MONOMER"/>
<dbReference type="BioCyc" id="MetaCyc:AT4G35630-MONOMER"/>
<dbReference type="BRENDA" id="2.6.1.52">
    <property type="organism ID" value="399"/>
</dbReference>
<dbReference type="SABIO-RK" id="Q96255"/>
<dbReference type="UniPathway" id="UPA00135">
    <property type="reaction ID" value="UER00197"/>
</dbReference>
<dbReference type="UniPathway" id="UPA00244">
    <property type="reaction ID" value="UER00311"/>
</dbReference>
<dbReference type="CD-CODE" id="4299E36E">
    <property type="entry name" value="Nucleolus"/>
</dbReference>
<dbReference type="PRO" id="PR:Q96255"/>
<dbReference type="Proteomes" id="UP000006548">
    <property type="component" value="Chromosome 4"/>
</dbReference>
<dbReference type="ExpressionAtlas" id="Q96255">
    <property type="expression patterns" value="baseline and differential"/>
</dbReference>
<dbReference type="GO" id="GO:0009507">
    <property type="term" value="C:chloroplast"/>
    <property type="evidence" value="ECO:0000314"/>
    <property type="project" value="TAIR"/>
</dbReference>
<dbReference type="GO" id="GO:0009570">
    <property type="term" value="C:chloroplast stroma"/>
    <property type="evidence" value="ECO:0007005"/>
    <property type="project" value="TAIR"/>
</dbReference>
<dbReference type="GO" id="GO:0009536">
    <property type="term" value="C:plastid"/>
    <property type="evidence" value="ECO:0007005"/>
    <property type="project" value="TAIR"/>
</dbReference>
<dbReference type="GO" id="GO:0004648">
    <property type="term" value="F:O-phospho-L-serine:2-oxoglutarate aminotransferase activity"/>
    <property type="evidence" value="ECO:0000314"/>
    <property type="project" value="TAIR"/>
</dbReference>
<dbReference type="GO" id="GO:0042803">
    <property type="term" value="F:protein homodimerization activity"/>
    <property type="evidence" value="ECO:0000314"/>
    <property type="project" value="UniProtKB"/>
</dbReference>
<dbReference type="GO" id="GO:0030170">
    <property type="term" value="F:pyridoxal phosphate binding"/>
    <property type="evidence" value="ECO:0000314"/>
    <property type="project" value="UniProtKB"/>
</dbReference>
<dbReference type="GO" id="GO:0006564">
    <property type="term" value="P:L-serine biosynthetic process"/>
    <property type="evidence" value="ECO:0000304"/>
    <property type="project" value="TAIR"/>
</dbReference>
<dbReference type="CDD" id="cd00611">
    <property type="entry name" value="PSAT_like"/>
    <property type="match status" value="1"/>
</dbReference>
<dbReference type="FunFam" id="3.40.640.10:FF:000010">
    <property type="entry name" value="Phosphoserine aminotransferase"/>
    <property type="match status" value="1"/>
</dbReference>
<dbReference type="FunFam" id="3.90.1150.10:FF:000006">
    <property type="entry name" value="Phosphoserine aminotransferase"/>
    <property type="match status" value="1"/>
</dbReference>
<dbReference type="Gene3D" id="3.90.1150.10">
    <property type="entry name" value="Aspartate Aminotransferase, domain 1"/>
    <property type="match status" value="1"/>
</dbReference>
<dbReference type="Gene3D" id="3.40.640.10">
    <property type="entry name" value="Type I PLP-dependent aspartate aminotransferase-like (Major domain)"/>
    <property type="match status" value="1"/>
</dbReference>
<dbReference type="HAMAP" id="MF_00160">
    <property type="entry name" value="SerC_aminotrans_5"/>
    <property type="match status" value="1"/>
</dbReference>
<dbReference type="InterPro" id="IPR000192">
    <property type="entry name" value="Aminotrans_V_dom"/>
</dbReference>
<dbReference type="InterPro" id="IPR020578">
    <property type="entry name" value="Aminotrans_V_PyrdxlP_BS"/>
</dbReference>
<dbReference type="InterPro" id="IPR022278">
    <property type="entry name" value="Pser_aminoTfrase"/>
</dbReference>
<dbReference type="InterPro" id="IPR015424">
    <property type="entry name" value="PyrdxlP-dep_Trfase"/>
</dbReference>
<dbReference type="InterPro" id="IPR015421">
    <property type="entry name" value="PyrdxlP-dep_Trfase_major"/>
</dbReference>
<dbReference type="InterPro" id="IPR015422">
    <property type="entry name" value="PyrdxlP-dep_Trfase_small"/>
</dbReference>
<dbReference type="NCBIfam" id="NF003764">
    <property type="entry name" value="PRK05355.1"/>
    <property type="match status" value="1"/>
</dbReference>
<dbReference type="NCBIfam" id="TIGR01364">
    <property type="entry name" value="serC_1"/>
    <property type="match status" value="1"/>
</dbReference>
<dbReference type="PANTHER" id="PTHR43247">
    <property type="entry name" value="PHOSPHOSERINE AMINOTRANSFERASE"/>
    <property type="match status" value="1"/>
</dbReference>
<dbReference type="PANTHER" id="PTHR43247:SF3">
    <property type="entry name" value="PHOSPHOSERINE AMINOTRANSFERASE 1, CHLOROPLASTIC"/>
    <property type="match status" value="1"/>
</dbReference>
<dbReference type="Pfam" id="PF00266">
    <property type="entry name" value="Aminotran_5"/>
    <property type="match status" value="1"/>
</dbReference>
<dbReference type="SUPFAM" id="SSF53383">
    <property type="entry name" value="PLP-dependent transferases"/>
    <property type="match status" value="1"/>
</dbReference>
<dbReference type="PROSITE" id="PS00595">
    <property type="entry name" value="AA_TRANSFER_CLASS_5"/>
    <property type="match status" value="1"/>
</dbReference>
<name>SERB1_ARATH</name>
<sequence length="430" mass="47359">MAATTNSFLVGSNNTQIPALKPKSSSQSFLHLSKPNTVNFVSKTKPVAVRCVASTTQVQDGVRSGSVGSQERVFNFAAGPATLPENVLLKAQADLYNWRGSGMSVMEMSHRGKEFLSIIQKAESDLRQLLEIPQEYSVLFLQGGATTQFAALPLNLCKSDDTVDFVVTGSWGDKAVKEAKKYCKTNVIWSGKSEKYTKVPSFEELEQTPDAKYLHICANETIHGVEFKDYPVPKNGFLVADMSSNFCSKPVDVSKFGVIYGGAQKNVGPSGVTIVIIRKDLIGNAQDITPVMLDYKIHDENSSLYNTPPCFGIYMCGLVFEDLLEQGGLKEVEKKNQRKADLLYNAIEESNGFFRCPVEKSVRSLMNVPFTLEKSELEAEFIKEAAKEKMVQLKGHRSVGGMRASIYNAMPLAGVEKLVAFMKDFQAKHA</sequence>
<reference key="1">
    <citation type="journal article" date="1998" name="Plant J.">
        <title>Molecular characterization of plastidic phosphoserine aminotransferase in serine biosynthesis from Arabidopsis.</title>
        <authorList>
            <person name="Ho C.-L."/>
            <person name="Noji M."/>
            <person name="Saito M."/>
            <person name="Yamazaki M."/>
            <person name="Saito K."/>
        </authorList>
    </citation>
    <scope>NUCLEOTIDE SEQUENCE [MRNA]</scope>
    <scope>FUNCTION</scope>
    <scope>CATALYTIC ACTIVITY</scope>
    <scope>BIOPHYSICOCHEMICAL PROPERTIES</scope>
    <scope>ACTIVITY REGULATION</scope>
    <scope>SUBCELLULAR LOCATION</scope>
    <scope>TISSUE SPECIFICITY</scope>
    <scope>PATHWAY</scope>
    <source>
        <strain>cv. Columbia</strain>
    </source>
</reference>
<reference key="2">
    <citation type="journal article" date="1999" name="Nature">
        <title>Sequence and analysis of chromosome 4 of the plant Arabidopsis thaliana.</title>
        <authorList>
            <person name="Mayer K.F.X."/>
            <person name="Schueller C."/>
            <person name="Wambutt R."/>
            <person name="Murphy G."/>
            <person name="Volckaert G."/>
            <person name="Pohl T."/>
            <person name="Duesterhoeft A."/>
            <person name="Stiekema W."/>
            <person name="Entian K.-D."/>
            <person name="Terryn N."/>
            <person name="Harris B."/>
            <person name="Ansorge W."/>
            <person name="Brandt P."/>
            <person name="Grivell L.A."/>
            <person name="Rieger M."/>
            <person name="Weichselgartner M."/>
            <person name="de Simone V."/>
            <person name="Obermaier B."/>
            <person name="Mache R."/>
            <person name="Mueller M."/>
            <person name="Kreis M."/>
            <person name="Delseny M."/>
            <person name="Puigdomenech P."/>
            <person name="Watson M."/>
            <person name="Schmidtheini T."/>
            <person name="Reichert B."/>
            <person name="Portetelle D."/>
            <person name="Perez-Alonso M."/>
            <person name="Boutry M."/>
            <person name="Bancroft I."/>
            <person name="Vos P."/>
            <person name="Hoheisel J."/>
            <person name="Zimmermann W."/>
            <person name="Wedler H."/>
            <person name="Ridley P."/>
            <person name="Langham S.-A."/>
            <person name="McCullagh B."/>
            <person name="Bilham L."/>
            <person name="Robben J."/>
            <person name="van der Schueren J."/>
            <person name="Grymonprez B."/>
            <person name="Chuang Y.-J."/>
            <person name="Vandenbussche F."/>
            <person name="Braeken M."/>
            <person name="Weltjens I."/>
            <person name="Voet M."/>
            <person name="Bastiaens I."/>
            <person name="Aert R."/>
            <person name="Defoor E."/>
            <person name="Weitzenegger T."/>
            <person name="Bothe G."/>
            <person name="Ramsperger U."/>
            <person name="Hilbert H."/>
            <person name="Braun M."/>
            <person name="Holzer E."/>
            <person name="Brandt A."/>
            <person name="Peters S."/>
            <person name="van Staveren M."/>
            <person name="Dirkse W."/>
            <person name="Mooijman P."/>
            <person name="Klein Lankhorst R."/>
            <person name="Rose M."/>
            <person name="Hauf J."/>
            <person name="Koetter P."/>
            <person name="Berneiser S."/>
            <person name="Hempel S."/>
            <person name="Feldpausch M."/>
            <person name="Lamberth S."/>
            <person name="Van den Daele H."/>
            <person name="De Keyser A."/>
            <person name="Buysshaert C."/>
            <person name="Gielen J."/>
            <person name="Villarroel R."/>
            <person name="De Clercq R."/>
            <person name="van Montagu M."/>
            <person name="Rogers J."/>
            <person name="Cronin A."/>
            <person name="Quail M.A."/>
            <person name="Bray-Allen S."/>
            <person name="Clark L."/>
            <person name="Doggett J."/>
            <person name="Hall S."/>
            <person name="Kay M."/>
            <person name="Lennard N."/>
            <person name="McLay K."/>
            <person name="Mayes R."/>
            <person name="Pettett A."/>
            <person name="Rajandream M.A."/>
            <person name="Lyne M."/>
            <person name="Benes V."/>
            <person name="Rechmann S."/>
            <person name="Borkova D."/>
            <person name="Bloecker H."/>
            <person name="Scharfe M."/>
            <person name="Grimm M."/>
            <person name="Loehnert T.-H."/>
            <person name="Dose S."/>
            <person name="de Haan M."/>
            <person name="Maarse A.C."/>
            <person name="Schaefer M."/>
            <person name="Mueller-Auer S."/>
            <person name="Gabel C."/>
            <person name="Fuchs M."/>
            <person name="Fartmann B."/>
            <person name="Granderath K."/>
            <person name="Dauner D."/>
            <person name="Herzl A."/>
            <person name="Neumann S."/>
            <person name="Argiriou A."/>
            <person name="Vitale D."/>
            <person name="Liguori R."/>
            <person name="Piravandi E."/>
            <person name="Massenet O."/>
            <person name="Quigley F."/>
            <person name="Clabauld G."/>
            <person name="Muendlein A."/>
            <person name="Felber R."/>
            <person name="Schnabl S."/>
            <person name="Hiller R."/>
            <person name="Schmidt W."/>
            <person name="Lecharny A."/>
            <person name="Aubourg S."/>
            <person name="Chefdor F."/>
            <person name="Cooke R."/>
            <person name="Berger C."/>
            <person name="Monfort A."/>
            <person name="Casacuberta E."/>
            <person name="Gibbons T."/>
            <person name="Weber N."/>
            <person name="Vandenbol M."/>
            <person name="Bargues M."/>
            <person name="Terol J."/>
            <person name="Torres A."/>
            <person name="Perez-Perez A."/>
            <person name="Purnelle B."/>
            <person name="Bent E."/>
            <person name="Johnson S."/>
            <person name="Tacon D."/>
            <person name="Jesse T."/>
            <person name="Heijnen L."/>
            <person name="Schwarz S."/>
            <person name="Scholler P."/>
            <person name="Heber S."/>
            <person name="Francs P."/>
            <person name="Bielke C."/>
            <person name="Frishman D."/>
            <person name="Haase D."/>
            <person name="Lemcke K."/>
            <person name="Mewes H.-W."/>
            <person name="Stocker S."/>
            <person name="Zaccaria P."/>
            <person name="Bevan M."/>
            <person name="Wilson R.K."/>
            <person name="de la Bastide M."/>
            <person name="Habermann K."/>
            <person name="Parnell L."/>
            <person name="Dedhia N."/>
            <person name="Gnoj L."/>
            <person name="Schutz K."/>
            <person name="Huang E."/>
            <person name="Spiegel L."/>
            <person name="Sekhon M."/>
            <person name="Murray J."/>
            <person name="Sheet P."/>
            <person name="Cordes M."/>
            <person name="Abu-Threideh J."/>
            <person name="Stoneking T."/>
            <person name="Kalicki J."/>
            <person name="Graves T."/>
            <person name="Harmon G."/>
            <person name="Edwards J."/>
            <person name="Latreille P."/>
            <person name="Courtney L."/>
            <person name="Cloud J."/>
            <person name="Abbott A."/>
            <person name="Scott K."/>
            <person name="Johnson D."/>
            <person name="Minx P."/>
            <person name="Bentley D."/>
            <person name="Fulton B."/>
            <person name="Miller N."/>
            <person name="Greco T."/>
            <person name="Kemp K."/>
            <person name="Kramer J."/>
            <person name="Fulton L."/>
            <person name="Mardis E."/>
            <person name="Dante M."/>
            <person name="Pepin K."/>
            <person name="Hillier L.W."/>
            <person name="Nelson J."/>
            <person name="Spieth J."/>
            <person name="Ryan E."/>
            <person name="Andrews S."/>
            <person name="Geisel C."/>
            <person name="Layman D."/>
            <person name="Du H."/>
            <person name="Ali J."/>
            <person name="Berghoff A."/>
            <person name="Jones K."/>
            <person name="Drone K."/>
            <person name="Cotton M."/>
            <person name="Joshu C."/>
            <person name="Antonoiu B."/>
            <person name="Zidanic M."/>
            <person name="Strong C."/>
            <person name="Sun H."/>
            <person name="Lamar B."/>
            <person name="Yordan C."/>
            <person name="Ma P."/>
            <person name="Zhong J."/>
            <person name="Preston R."/>
            <person name="Vil D."/>
            <person name="Shekher M."/>
            <person name="Matero A."/>
            <person name="Shah R."/>
            <person name="Swaby I.K."/>
            <person name="O'Shaughnessy A."/>
            <person name="Rodriguez M."/>
            <person name="Hoffman J."/>
            <person name="Till S."/>
            <person name="Granat S."/>
            <person name="Shohdy N."/>
            <person name="Hasegawa A."/>
            <person name="Hameed A."/>
            <person name="Lodhi M."/>
            <person name="Johnson A."/>
            <person name="Chen E."/>
            <person name="Marra M.A."/>
            <person name="Martienssen R."/>
            <person name="McCombie W.R."/>
        </authorList>
    </citation>
    <scope>NUCLEOTIDE SEQUENCE [LARGE SCALE GENOMIC DNA]</scope>
    <source>
        <strain>cv. Columbia</strain>
    </source>
</reference>
<reference key="3">
    <citation type="journal article" date="2017" name="Plant J.">
        <title>Araport11: a complete reannotation of the Arabidopsis thaliana reference genome.</title>
        <authorList>
            <person name="Cheng C.Y."/>
            <person name="Krishnakumar V."/>
            <person name="Chan A.P."/>
            <person name="Thibaud-Nissen F."/>
            <person name="Schobel S."/>
            <person name="Town C.D."/>
        </authorList>
    </citation>
    <scope>GENOME REANNOTATION</scope>
    <source>
        <strain>cv. Columbia</strain>
    </source>
</reference>
<reference key="4">
    <citation type="journal article" date="2003" name="Science">
        <title>Empirical analysis of transcriptional activity in the Arabidopsis genome.</title>
        <authorList>
            <person name="Yamada K."/>
            <person name="Lim J."/>
            <person name="Dale J.M."/>
            <person name="Chen H."/>
            <person name="Shinn P."/>
            <person name="Palm C.J."/>
            <person name="Southwick A.M."/>
            <person name="Wu H.C."/>
            <person name="Kim C.J."/>
            <person name="Nguyen M."/>
            <person name="Pham P.K."/>
            <person name="Cheuk R.F."/>
            <person name="Karlin-Newmann G."/>
            <person name="Liu S.X."/>
            <person name="Lam B."/>
            <person name="Sakano H."/>
            <person name="Wu T."/>
            <person name="Yu G."/>
            <person name="Miranda M."/>
            <person name="Quach H.L."/>
            <person name="Tripp M."/>
            <person name="Chang C.H."/>
            <person name="Lee J.M."/>
            <person name="Toriumi M.J."/>
            <person name="Chan M.M."/>
            <person name="Tang C.C."/>
            <person name="Onodera C.S."/>
            <person name="Deng J.M."/>
            <person name="Akiyama K."/>
            <person name="Ansari Y."/>
            <person name="Arakawa T."/>
            <person name="Banh J."/>
            <person name="Banno F."/>
            <person name="Bowser L."/>
            <person name="Brooks S.Y."/>
            <person name="Carninci P."/>
            <person name="Chao Q."/>
            <person name="Choy N."/>
            <person name="Enju A."/>
            <person name="Goldsmith A.D."/>
            <person name="Gurjal M."/>
            <person name="Hansen N.F."/>
            <person name="Hayashizaki Y."/>
            <person name="Johnson-Hopson C."/>
            <person name="Hsuan V.W."/>
            <person name="Iida K."/>
            <person name="Karnes M."/>
            <person name="Khan S."/>
            <person name="Koesema E."/>
            <person name="Ishida J."/>
            <person name="Jiang P.X."/>
            <person name="Jones T."/>
            <person name="Kawai J."/>
            <person name="Kamiya A."/>
            <person name="Meyers C."/>
            <person name="Nakajima M."/>
            <person name="Narusaka M."/>
            <person name="Seki M."/>
            <person name="Sakurai T."/>
            <person name="Satou M."/>
            <person name="Tamse R."/>
            <person name="Vaysberg M."/>
            <person name="Wallender E.K."/>
            <person name="Wong C."/>
            <person name="Yamamura Y."/>
            <person name="Yuan S."/>
            <person name="Shinozaki K."/>
            <person name="Davis R.W."/>
            <person name="Theologis A."/>
            <person name="Ecker J.R."/>
        </authorList>
    </citation>
    <scope>NUCLEOTIDE SEQUENCE [LARGE SCALE MRNA]</scope>
    <source>
        <strain>cv. Columbia</strain>
    </source>
</reference>
<reference key="5">
    <citation type="submission" date="2006-06" db="EMBL/GenBank/DDBJ databases">
        <title>Arabidopsis ORF clones.</title>
        <authorList>
            <person name="Shinn P."/>
            <person name="Chen H."/>
            <person name="Kim C.J."/>
            <person name="Quinitio C."/>
            <person name="Ecker J.R."/>
        </authorList>
    </citation>
    <scope>NUCLEOTIDE SEQUENCE [LARGE SCALE MRNA]</scope>
    <source>
        <strain>cv. Columbia</strain>
    </source>
</reference>
<reference key="6">
    <citation type="submission" date="2002-03" db="EMBL/GenBank/DDBJ databases">
        <title>Full-length cDNA from Arabidopsis thaliana.</title>
        <authorList>
            <person name="Brover V.V."/>
            <person name="Troukhan M.E."/>
            <person name="Alexandrov N.A."/>
            <person name="Lu Y.-P."/>
            <person name="Flavell R.B."/>
            <person name="Feldmann K.A."/>
        </authorList>
    </citation>
    <scope>NUCLEOTIDE SEQUENCE [LARGE SCALE MRNA]</scope>
</reference>
<reference key="7">
    <citation type="journal article" date="2006" name="Mol. Biochem. Parasitol.">
        <title>Biochemical and functional characterization of phosphoserine aminotransferase from Entamoeba histolytica, which possesses both phosphorylated and non-phosphorylated serine metabolic pathways.</title>
        <authorList>
            <person name="Ali V."/>
            <person name="Nozaki T."/>
        </authorList>
    </citation>
    <scope>FUNCTION</scope>
    <scope>CATALYTIC ACTIVITY</scope>
    <scope>BIOPHYSICOCHEMICAL PROPERTIES</scope>
    <scope>ACTIVITY REGULATION</scope>
    <scope>PATHWAY</scope>
</reference>
<reference key="8">
    <citation type="journal article" date="2012" name="Mol. Cell. Proteomics">
        <title>Comparative large-scale characterisation of plant vs. mammal proteins reveals similar and idiosyncratic N-alpha acetylation features.</title>
        <authorList>
            <person name="Bienvenut W.V."/>
            <person name="Sumpton D."/>
            <person name="Martinez A."/>
            <person name="Lilla S."/>
            <person name="Espagne C."/>
            <person name="Meinnel T."/>
            <person name="Giglione C."/>
        </authorList>
    </citation>
    <scope>ACETYLATION [LARGE SCALE ANALYSIS] AT VAL-52</scope>
    <scope>CLEAVAGE OF TRANSIT PEPTIDE [LARGE SCALE ANALYSIS] AFTER CYS-51</scope>
    <scope>IDENTIFICATION BY MASS SPECTROMETRY [LARGE SCALE ANALYSIS]</scope>
</reference>
<reference key="9">
    <citation type="journal article" date="2013" name="Plant Cell">
        <title>Arabidopsis phosphoglycerate dehydrogenase1 of the phosphoserine pathway is essential for development and required for ammonium assimilation and tryptophan biosynthesis.</title>
        <authorList>
            <person name="Benstein R.M."/>
            <person name="Ludewig K."/>
            <person name="Wulfert S."/>
            <person name="Wittek S."/>
            <person name="Gigolashvili T."/>
            <person name="Frerigmann H."/>
            <person name="Gierth M."/>
            <person name="Fluegge U.I."/>
            <person name="Krueger S."/>
        </authorList>
    </citation>
    <scope>INDUCTION BY PATHOGEN</scope>
    <source>
        <strain>cv. Columbia</strain>
    </source>
</reference>
<reference key="10">
    <citation type="journal article" date="2018" name="Front. Plant Sci.">
        <title>Structural Analysis of Phosphoserine Aminotransferase (Isoform 1) From Arabidopsis thaliana- the Enzyme Involved in the Phosphorylated Pathway of Serine Biosynthesis.</title>
        <authorList>
            <person name="Sekula B."/>
            <person name="Ruszkowski M."/>
            <person name="Dauter Z."/>
        </authorList>
    </citation>
    <scope>X-RAY CRYSTALLOGRAPHY (1.57 ANGSTROMS) OF 72-430 IN COMPLEX WITH PYRIDOXAL PHOSPHATE</scope>
    <scope>SUBUNIT</scope>
    <scope>COFACTOR</scope>
</reference>
<organism>
    <name type="scientific">Arabidopsis thaliana</name>
    <name type="common">Mouse-ear cress</name>
    <dbReference type="NCBI Taxonomy" id="3702"/>
    <lineage>
        <taxon>Eukaryota</taxon>
        <taxon>Viridiplantae</taxon>
        <taxon>Streptophyta</taxon>
        <taxon>Embryophyta</taxon>
        <taxon>Tracheophyta</taxon>
        <taxon>Spermatophyta</taxon>
        <taxon>Magnoliopsida</taxon>
        <taxon>eudicotyledons</taxon>
        <taxon>Gunneridae</taxon>
        <taxon>Pentapetalae</taxon>
        <taxon>rosids</taxon>
        <taxon>malvids</taxon>
        <taxon>Brassicales</taxon>
        <taxon>Brassicaceae</taxon>
        <taxon>Camelineae</taxon>
        <taxon>Arabidopsis</taxon>
    </lineage>
</organism>
<evidence type="ECO:0000250" key="1"/>
<evidence type="ECO:0000269" key="2">
    <source>
    </source>
</evidence>
<evidence type="ECO:0000269" key="3">
    <source>
    </source>
</evidence>
<evidence type="ECO:0000269" key="4">
    <source>
    </source>
</evidence>
<evidence type="ECO:0000269" key="5">
    <source>
    </source>
</evidence>
<evidence type="ECO:0000303" key="6">
    <source>
    </source>
</evidence>
<evidence type="ECO:0000303" key="7">
    <source>
    </source>
</evidence>
<evidence type="ECO:0000305" key="8"/>
<evidence type="ECO:0000312" key="9">
    <source>
        <dbReference type="Araport" id="AT4G35630"/>
    </source>
</evidence>
<evidence type="ECO:0000312" key="10">
    <source>
        <dbReference type="EMBL" id="CAA20033.1"/>
    </source>
</evidence>
<evidence type="ECO:0007744" key="11">
    <source>
        <dbReference type="PDB" id="6CZY"/>
    </source>
</evidence>
<evidence type="ECO:0007744" key="12">
    <source>
        <dbReference type="PDB" id="6CZZ"/>
    </source>
</evidence>
<evidence type="ECO:0007744" key="13">
    <source>
    </source>
</evidence>
<evidence type="ECO:0007829" key="14">
    <source>
        <dbReference type="PDB" id="6CZX"/>
    </source>
</evidence>
<evidence type="ECO:0007829" key="15">
    <source>
        <dbReference type="PDB" id="6CZZ"/>
    </source>
</evidence>
<gene>
    <name evidence="6 7" type="primary">PSAT1</name>
    <name evidence="9" type="ordered locus">At4g35630</name>
    <name evidence="10" type="ORF">F8D20.140</name>
</gene>
<proteinExistence type="evidence at protein level"/>
<comment type="function">
    <text evidence="2 5">Involved in the plastidial phosphorylated pathway of serine biosynthesis (PPSB). Catalyzes the reversible conversion of 3-phosphohydroxypyruvate to phosphoserine.</text>
</comment>
<comment type="catalytic activity">
    <reaction evidence="2 5">
        <text>O-phospho-L-serine + 2-oxoglutarate = 3-phosphooxypyruvate + L-glutamate</text>
        <dbReference type="Rhea" id="RHEA:14329"/>
        <dbReference type="ChEBI" id="CHEBI:16810"/>
        <dbReference type="ChEBI" id="CHEBI:18110"/>
        <dbReference type="ChEBI" id="CHEBI:29985"/>
        <dbReference type="ChEBI" id="CHEBI:57524"/>
        <dbReference type="EC" id="2.6.1.52"/>
    </reaction>
</comment>
<comment type="catalytic activity">
    <reaction evidence="2 5">
        <text>4-(phosphooxy)-L-threonine + 2-oxoglutarate = (R)-3-hydroxy-2-oxo-4-phosphooxybutanoate + L-glutamate</text>
        <dbReference type="Rhea" id="RHEA:16573"/>
        <dbReference type="ChEBI" id="CHEBI:16810"/>
        <dbReference type="ChEBI" id="CHEBI:29985"/>
        <dbReference type="ChEBI" id="CHEBI:58452"/>
        <dbReference type="ChEBI" id="CHEBI:58538"/>
        <dbReference type="EC" id="2.6.1.52"/>
    </reaction>
</comment>
<comment type="cofactor">
    <cofactor evidence="4">
        <name>pyridoxal 5'-phosphate</name>
        <dbReference type="ChEBI" id="CHEBI:597326"/>
    </cofactor>
    <text evidence="4">Binds 1 pyridoxal phosphate per subunit.</text>
</comment>
<comment type="activity regulation">
    <text evidence="2 5">Inhibited by high concentration of cysteine and by 3-phosphonooxypyruvate. Not inhibited by serine, threonine, valine, glycine, tryptophan and O-acetyl-L-serine.</text>
</comment>
<comment type="biophysicochemical properties">
    <kinetics>
        <KM evidence="2">5050 uM for L-glutamate</KM>
        <KM evidence="5">70 uM for L-glutamate</KM>
        <KM evidence="2">79.7 uM for 3-phosphonooxypyruvate</KM>
        <KM evidence="5">5 uM for 3-phosphonooxypyruvate</KM>
        <KM evidence="2">22.5 uM for O-phospho-L-serine</KM>
        <KM evidence="2">65.1 uM for 2-oxoglutarate</KM>
        <Vmax evidence="2">9.65 umol/min/mg enzyme toward 3-phosphonooxypyruvate</Vmax>
        <Vmax evidence="2">21.22 umol/min/mg enzyme toward L-glutamate</Vmax>
        <Vmax evidence="2">0.47 umol/min/mg enzyme toward O-phospho-L-serine</Vmax>
        <Vmax evidence="2">0.74 umol/min/mg enzyme toward 2-oxoglutarate</Vmax>
    </kinetics>
</comment>
<comment type="pathway">
    <text evidence="2 5">Amino-acid biosynthesis; L-serine biosynthesis; L-serine from 3-phospho-D-glycerate: step 2/3.</text>
</comment>
<comment type="pathway">
    <text evidence="2 5">Cofactor biosynthesis; pyridoxine 5'-phosphate biosynthesis; pyridoxine 5'-phosphate from D-erythrose 4-phosphate: step 3/5.</text>
</comment>
<comment type="subunit">
    <text evidence="4">Homodimer.</text>
</comment>
<comment type="subcellular location">
    <subcellularLocation>
        <location evidence="5">Plastid</location>
        <location evidence="5">Chloroplast</location>
    </subcellularLocation>
</comment>
<comment type="tissue specificity">
    <text evidence="5">Ubiquitous, but expressed preferentially in light-grown roots and shoots. Detected in root meristems and in root tissues surrounding the vascular bundle.</text>
</comment>
<comment type="induction">
    <text evidence="3">Up-regulated upon necrotrophic pathogen infection.</text>
</comment>
<comment type="similarity">
    <text evidence="8">Belongs to the class-V pyridoxal-phosphate-dependent aminotransferase family. SerC subfamily.</text>
</comment>
<keyword id="KW-0002">3D-structure</keyword>
<keyword id="KW-0007">Acetylation</keyword>
<keyword id="KW-0028">Amino-acid biosynthesis</keyword>
<keyword id="KW-0032">Aminotransferase</keyword>
<keyword id="KW-0150">Chloroplast</keyword>
<keyword id="KW-0934">Plastid</keyword>
<keyword id="KW-0663">Pyridoxal phosphate</keyword>
<keyword id="KW-1185">Reference proteome</keyword>
<keyword id="KW-0718">Serine biosynthesis</keyword>
<keyword id="KW-0808">Transferase</keyword>
<keyword id="KW-0809">Transit peptide</keyword>
<protein>
    <recommendedName>
        <fullName evidence="6 7">Phosphoserine aminotransferase 1, chloroplastic</fullName>
        <shortName evidence="6 7">AtPSAT1</shortName>
        <ecNumber evidence="2 5">2.6.1.52</ecNumber>
    </recommendedName>
    <alternativeName>
        <fullName evidence="6">Phosphohydroxythreonine aminotransferase</fullName>
    </alternativeName>
</protein>
<feature type="transit peptide" description="Chloroplast" evidence="13">
    <location>
        <begin position="1"/>
        <end position="51"/>
    </location>
</feature>
<feature type="chain" id="PRO_0000001282" description="Phosphoserine aminotransferase 1, chloroplastic">
    <location>
        <begin position="52"/>
        <end position="430"/>
    </location>
</feature>
<feature type="binding site" evidence="1">
    <location>
        <position position="111"/>
    </location>
    <ligand>
        <name>L-glutamate</name>
        <dbReference type="ChEBI" id="CHEBI:29985"/>
    </ligand>
</feature>
<feature type="binding site" evidence="4 11 12">
    <location>
        <begin position="145"/>
        <end position="146"/>
    </location>
    <ligand>
        <name>pyridoxal 5'-phosphate</name>
        <dbReference type="ChEBI" id="CHEBI:597326"/>
    </ligand>
</feature>
<feature type="binding site" evidence="4 12">
    <location>
        <position position="171"/>
    </location>
    <ligand>
        <name>pyridoxal 5'-phosphate</name>
        <dbReference type="ChEBI" id="CHEBI:597326"/>
    </ligand>
</feature>
<feature type="binding site" evidence="4 11 12">
    <location>
        <position position="221"/>
    </location>
    <ligand>
        <name>pyridoxal 5'-phosphate</name>
        <dbReference type="ChEBI" id="CHEBI:597326"/>
    </ligand>
</feature>
<feature type="binding site" evidence="4 11 12">
    <location>
        <position position="241"/>
    </location>
    <ligand>
        <name>pyridoxal 5'-phosphate</name>
        <dbReference type="ChEBI" id="CHEBI:597326"/>
    </ligand>
</feature>
<feature type="binding site" evidence="4 11 12">
    <location>
        <position position="264"/>
    </location>
    <ligand>
        <name>pyridoxal 5'-phosphate</name>
        <dbReference type="ChEBI" id="CHEBI:597326"/>
    </ligand>
</feature>
<feature type="binding site" evidence="4 11 12">
    <location>
        <begin position="306"/>
        <end position="307"/>
    </location>
    <ligand>
        <name>pyridoxal 5'-phosphate</name>
        <dbReference type="ChEBI" id="CHEBI:597326"/>
    </ligand>
</feature>
<feature type="modified residue" description="N-acetylvaline" evidence="13">
    <location>
        <position position="52"/>
    </location>
</feature>
<feature type="modified residue" description="N6-(pyridoxal phosphate)lysine" evidence="4 11 12">
    <location>
        <position position="265"/>
    </location>
</feature>
<feature type="sequence conflict" description="In Ref. 6; AAM64881." evidence="8" ref="6">
    <original>V</original>
    <variation>A</variation>
    <location>
        <position position="41"/>
    </location>
</feature>
<feature type="sequence conflict" description="In Ref. 4; AAM91543." evidence="8" ref="4">
    <original>Q</original>
    <variation>R</variation>
    <location>
        <position position="120"/>
    </location>
</feature>
<feature type="sequence conflict" description="In Ref. 6; AAM64881." evidence="8" ref="6">
    <original>M</original>
    <variation>I</variation>
    <location>
        <position position="422"/>
    </location>
</feature>
<feature type="strand" evidence="14">
    <location>
        <begin position="78"/>
        <end position="80"/>
    </location>
</feature>
<feature type="helix" evidence="14">
    <location>
        <begin position="85"/>
        <end position="94"/>
    </location>
</feature>
<feature type="strand" evidence="14">
    <location>
        <begin position="95"/>
        <end position="97"/>
    </location>
</feature>
<feature type="helix" evidence="14">
    <location>
        <begin position="98"/>
        <end position="100"/>
    </location>
</feature>
<feature type="strand" evidence="14">
    <location>
        <begin position="101"/>
        <end position="103"/>
    </location>
</feature>
<feature type="helix" evidence="14">
    <location>
        <begin position="105"/>
        <end position="107"/>
    </location>
</feature>
<feature type="helix" evidence="14">
    <location>
        <begin position="113"/>
        <end position="130"/>
    </location>
</feature>
<feature type="strand" evidence="14">
    <location>
        <begin position="136"/>
        <end position="143"/>
    </location>
</feature>
<feature type="helix" evidence="14">
    <location>
        <begin position="144"/>
        <end position="156"/>
    </location>
</feature>
<feature type="strand" evidence="14">
    <location>
        <begin position="162"/>
        <end position="167"/>
    </location>
</feature>
<feature type="helix" evidence="14">
    <location>
        <begin position="170"/>
        <end position="179"/>
    </location>
</feature>
<feature type="turn" evidence="14">
    <location>
        <begin position="180"/>
        <end position="182"/>
    </location>
</feature>
<feature type="strand" evidence="14">
    <location>
        <begin position="183"/>
        <end position="190"/>
    </location>
</feature>
<feature type="helix" evidence="14">
    <location>
        <begin position="192"/>
        <end position="194"/>
    </location>
</feature>
<feature type="helix" evidence="15">
    <location>
        <begin position="202"/>
        <end position="204"/>
    </location>
</feature>
<feature type="strand" evidence="14">
    <location>
        <begin position="212"/>
        <end position="220"/>
    </location>
</feature>
<feature type="turn" evidence="14">
    <location>
        <begin position="221"/>
        <end position="224"/>
    </location>
</feature>
<feature type="strand" evidence="14">
    <location>
        <begin position="234"/>
        <end position="241"/>
    </location>
</feature>
<feature type="turn" evidence="14">
    <location>
        <begin position="243"/>
        <end position="247"/>
    </location>
</feature>
<feature type="helix" evidence="14">
    <location>
        <begin position="253"/>
        <end position="255"/>
    </location>
</feature>
<feature type="strand" evidence="14">
    <location>
        <begin position="257"/>
        <end position="262"/>
    </location>
</feature>
<feature type="turn" evidence="15">
    <location>
        <begin position="263"/>
        <end position="267"/>
    </location>
</feature>
<feature type="strand" evidence="14">
    <location>
        <begin position="273"/>
        <end position="278"/>
    </location>
</feature>
<feature type="helix" evidence="14">
    <location>
        <begin position="279"/>
        <end position="281"/>
    </location>
</feature>
<feature type="helix" evidence="14">
    <location>
        <begin position="291"/>
        <end position="293"/>
    </location>
</feature>
<feature type="helix" evidence="14">
    <location>
        <begin position="295"/>
        <end position="300"/>
    </location>
</feature>
<feature type="turn" evidence="14">
    <location>
        <begin position="301"/>
        <end position="303"/>
    </location>
</feature>
<feature type="helix" evidence="14">
    <location>
        <begin position="310"/>
        <end position="325"/>
    </location>
</feature>
<feature type="helix" evidence="14">
    <location>
        <begin position="329"/>
        <end position="348"/>
    </location>
</feature>
<feature type="turn" evidence="15">
    <location>
        <begin position="349"/>
        <end position="352"/>
    </location>
</feature>
<feature type="strand" evidence="14">
    <location>
        <begin position="353"/>
        <end position="355"/>
    </location>
</feature>
<feature type="helix" evidence="14">
    <location>
        <begin position="360"/>
        <end position="362"/>
    </location>
</feature>
<feature type="strand" evidence="14">
    <location>
        <begin position="365"/>
        <end position="374"/>
    </location>
</feature>
<feature type="helix" evidence="14">
    <location>
        <begin position="375"/>
        <end position="377"/>
    </location>
</feature>
<feature type="helix" evidence="14">
    <location>
        <begin position="378"/>
        <end position="387"/>
    </location>
</feature>
<feature type="turn" evidence="14">
    <location>
        <begin position="397"/>
        <end position="399"/>
    </location>
</feature>
<feature type="strand" evidence="14">
    <location>
        <begin position="401"/>
        <end position="405"/>
    </location>
</feature>
<feature type="helix" evidence="14">
    <location>
        <begin position="412"/>
        <end position="429"/>
    </location>
</feature>